<sequence>MGRLDGKVIVLTAAAQGIGRAAALAFAKEGAKVIATDINDSKLQELDKYPGIHTRVLDVTKKKQIDQFANDIERLDVLFNVAGFVHHGTILDCEETDWDFSMNLNVRSMYLMIKAFLPKMMAQKSGNIINMSSVASSIKGVVNRCVYSTTKAAVIGLTKSVAADFIQQGIRCNCVCPGTVDTPSLQERIQARPNPEEALSDFLKRQKTGRFATAEEVALLCVYLASDESAYITGNPVIIDGGWSL</sequence>
<protein>
    <recommendedName>
        <fullName>Dehydrogenase/reductase SDR family member 6</fullName>
        <ecNumber evidence="6">1.1.1.-</ecNumber>
    </recommendedName>
    <alternativeName>
        <fullName>(R)-beta-hydroxybutyrate dehydrogenase</fullName>
    </alternativeName>
    <alternativeName>
        <fullName>3-hydroxybutyrate dehydrogenase type 2</fullName>
        <ecNumber evidence="4">1.1.1.30</ecNumber>
    </alternativeName>
    <alternativeName>
        <fullName>4-oxo-L-proline reductase</fullName>
        <ecNumber evidence="2 4">1.1.1.104</ecNumber>
    </alternativeName>
    <alternativeName>
        <fullName>Oxidoreductase UCPA</fullName>
    </alternativeName>
    <alternativeName>
        <fullName>Short chain dehydrogenase/reductase family 15C member 1</fullName>
    </alternativeName>
</protein>
<gene>
    <name type="primary">BDH2</name>
    <name type="synonym">DHRS6</name>
</gene>
<proteinExistence type="evidence at transcript level"/>
<accession>Q3T046</accession>
<organism>
    <name type="scientific">Bos taurus</name>
    <name type="common">Bovine</name>
    <dbReference type="NCBI Taxonomy" id="9913"/>
    <lineage>
        <taxon>Eukaryota</taxon>
        <taxon>Metazoa</taxon>
        <taxon>Chordata</taxon>
        <taxon>Craniata</taxon>
        <taxon>Vertebrata</taxon>
        <taxon>Euteleostomi</taxon>
        <taxon>Mammalia</taxon>
        <taxon>Eutheria</taxon>
        <taxon>Laurasiatheria</taxon>
        <taxon>Artiodactyla</taxon>
        <taxon>Ruminantia</taxon>
        <taxon>Pecora</taxon>
        <taxon>Bovidae</taxon>
        <taxon>Bovinae</taxon>
        <taxon>Bos</taxon>
    </lineage>
</organism>
<keyword id="KW-0963">Cytoplasm</keyword>
<keyword id="KW-0443">Lipid metabolism</keyword>
<keyword id="KW-0520">NAD</keyword>
<keyword id="KW-0560">Oxidoreductase</keyword>
<keyword id="KW-1185">Reference proteome</keyword>
<evidence type="ECO:0000250" key="1"/>
<evidence type="ECO:0000250" key="2">
    <source>
        <dbReference type="UniProtKB" id="D4A1J4"/>
    </source>
</evidence>
<evidence type="ECO:0000250" key="3">
    <source>
        <dbReference type="UniProtKB" id="Q8JZV9"/>
    </source>
</evidence>
<evidence type="ECO:0000250" key="4">
    <source>
        <dbReference type="UniProtKB" id="Q9BUT1"/>
    </source>
</evidence>
<evidence type="ECO:0000255" key="5">
    <source>
        <dbReference type="PROSITE-ProRule" id="PRU10001"/>
    </source>
</evidence>
<evidence type="ECO:0000305" key="6"/>
<name>DHRS6_BOVIN</name>
<feature type="chain" id="PRO_0000247551" description="Dehydrogenase/reductase SDR family member 6">
    <location>
        <begin position="1"/>
        <end position="245"/>
    </location>
</feature>
<feature type="active site" description="Proton acceptor" evidence="5">
    <location>
        <position position="147"/>
    </location>
</feature>
<feature type="binding site" evidence="4">
    <location>
        <begin position="16"/>
        <end position="18"/>
    </location>
    <ligand>
        <name>NAD(+)</name>
        <dbReference type="ChEBI" id="CHEBI:57540"/>
    </ligand>
</feature>
<feature type="binding site" evidence="4">
    <location>
        <position position="37"/>
    </location>
    <ligand>
        <name>NAD(+)</name>
        <dbReference type="ChEBI" id="CHEBI:57540"/>
    </ligand>
</feature>
<feature type="binding site" evidence="4">
    <location>
        <position position="58"/>
    </location>
    <ligand>
        <name>NAD(+)</name>
        <dbReference type="ChEBI" id="CHEBI:57540"/>
    </ligand>
</feature>
<feature type="binding site" evidence="1">
    <location>
        <position position="144"/>
    </location>
    <ligand>
        <name>substrate</name>
    </ligand>
</feature>
<feature type="binding site" evidence="4">
    <location>
        <position position="151"/>
    </location>
    <ligand>
        <name>NAD(+)</name>
        <dbReference type="ChEBI" id="CHEBI:57540"/>
    </ligand>
</feature>
<feature type="binding site" evidence="4">
    <location>
        <begin position="180"/>
        <end position="184"/>
    </location>
    <ligand>
        <name>NAD(+)</name>
        <dbReference type="ChEBI" id="CHEBI:57540"/>
    </ligand>
</feature>
<feature type="binding site" evidence="1">
    <location>
        <position position="188"/>
    </location>
    <ligand>
        <name>substrate</name>
    </ligand>
</feature>
<feature type="binding site" evidence="1">
    <location>
        <position position="205"/>
    </location>
    <ligand>
        <name>substrate</name>
    </ligand>
</feature>
<comment type="function">
    <text evidence="2 3 4">NAD(H)-dependent dehydrogenase/reductase with a preference for cyclic substrates (By similarity). Catalyzes stereoselective conversion of 4-oxo-L-proline to cis-4-hydroxy-L-proline, likely a detoxification mechanism for ketoprolines (By similarity). Mediates the formation of 2,5-dihydroxybenzoate (2,5-DHBA), a siderophore that chelates free cytoplasmic iron and associates with LCN2, thereby regulating iron transport and homeostasis while protecting cells against free radical-induced oxidative stress. The iron-siderophore complex is imported into mitochondria, providing an iron source for mitochondrial metabolic processes in particular heme synthesis (By similarity). May act as a 3-hydroxybutyrate dehydrogenase (By similarity).</text>
</comment>
<comment type="catalytic activity">
    <reaction evidence="2 4">
        <text>cis-4-hydroxy-L-proline + NAD(+) = 4-oxo-L-proline + NADH + H(+)</text>
        <dbReference type="Rhea" id="RHEA:13601"/>
        <dbReference type="ChEBI" id="CHEBI:15378"/>
        <dbReference type="ChEBI" id="CHEBI:57540"/>
        <dbReference type="ChEBI" id="CHEBI:57945"/>
        <dbReference type="ChEBI" id="CHEBI:63727"/>
        <dbReference type="ChEBI" id="CHEBI:84813"/>
        <dbReference type="EC" id="1.1.1.104"/>
    </reaction>
    <physiologicalReaction direction="right-to-left" evidence="2 4">
        <dbReference type="Rhea" id="RHEA:13603"/>
    </physiologicalReaction>
</comment>
<comment type="catalytic activity">
    <reaction evidence="4">
        <text>(R)-3-hydroxybutanoate + NAD(+) = acetoacetate + NADH + H(+)</text>
        <dbReference type="Rhea" id="RHEA:20521"/>
        <dbReference type="ChEBI" id="CHEBI:10983"/>
        <dbReference type="ChEBI" id="CHEBI:13705"/>
        <dbReference type="ChEBI" id="CHEBI:15378"/>
        <dbReference type="ChEBI" id="CHEBI:57540"/>
        <dbReference type="ChEBI" id="CHEBI:57945"/>
        <dbReference type="EC" id="1.1.1.30"/>
    </reaction>
</comment>
<comment type="pathway">
    <text evidence="4">Amino-acid metabolism.</text>
</comment>
<comment type="pathway">
    <text evidence="3">Siderophore biosynthesis.</text>
</comment>
<comment type="subunit">
    <text evidence="4">Homotetramer.</text>
</comment>
<comment type="subcellular location">
    <subcellularLocation>
        <location evidence="4">Cytoplasm</location>
    </subcellularLocation>
</comment>
<comment type="similarity">
    <text evidence="6">Belongs to the short-chain dehydrogenases/reductases (SDR) family.</text>
</comment>
<comment type="caution">
    <text evidence="3 4">Postulated to act as a 3-hydroxybutyrate dehydrogenase, however its contribution to ketone body formation appears to be physiologically irrelevant since it has very low affinity for the substrate.</text>
</comment>
<dbReference type="EC" id="1.1.1.-" evidence="6"/>
<dbReference type="EC" id="1.1.1.30" evidence="4"/>
<dbReference type="EC" id="1.1.1.104" evidence="2 4"/>
<dbReference type="EMBL" id="BC102567">
    <property type="protein sequence ID" value="AAI02568.1"/>
    <property type="molecule type" value="mRNA"/>
</dbReference>
<dbReference type="RefSeq" id="NP_001029660.1">
    <property type="nucleotide sequence ID" value="NM_001034488.2"/>
</dbReference>
<dbReference type="SMR" id="Q3T046"/>
<dbReference type="FunCoup" id="Q3T046">
    <property type="interactions" value="116"/>
</dbReference>
<dbReference type="STRING" id="9913.ENSBTAP00000003277"/>
<dbReference type="PaxDb" id="9913-ENSBTAP00000003277"/>
<dbReference type="PeptideAtlas" id="Q3T046"/>
<dbReference type="GeneID" id="515321"/>
<dbReference type="KEGG" id="bta:515321"/>
<dbReference type="CTD" id="56898"/>
<dbReference type="eggNOG" id="KOG0725">
    <property type="taxonomic scope" value="Eukaryota"/>
</dbReference>
<dbReference type="InParanoid" id="Q3T046"/>
<dbReference type="OrthoDB" id="47007at2759"/>
<dbReference type="Proteomes" id="UP000009136">
    <property type="component" value="Unplaced"/>
</dbReference>
<dbReference type="GO" id="GO:0005737">
    <property type="term" value="C:cytoplasm"/>
    <property type="evidence" value="ECO:0000318"/>
    <property type="project" value="GO_Central"/>
</dbReference>
<dbReference type="GO" id="GO:0003858">
    <property type="term" value="F:3-hydroxybutyrate dehydrogenase activity"/>
    <property type="evidence" value="ECO:0000318"/>
    <property type="project" value="GO_Central"/>
</dbReference>
<dbReference type="GO" id="GO:0016617">
    <property type="term" value="F:4-oxoproline reductase activity"/>
    <property type="evidence" value="ECO:0007669"/>
    <property type="project" value="RHEA"/>
</dbReference>
<dbReference type="GO" id="GO:0016628">
    <property type="term" value="F:oxidoreductase activity, acting on the CH-CH group of donors, NAD or NADP as acceptor"/>
    <property type="evidence" value="ECO:0000250"/>
    <property type="project" value="UniProtKB"/>
</dbReference>
<dbReference type="GO" id="GO:0042168">
    <property type="term" value="P:heme metabolic process"/>
    <property type="evidence" value="ECO:0000250"/>
    <property type="project" value="UniProtKB"/>
</dbReference>
<dbReference type="GO" id="GO:0006629">
    <property type="term" value="P:lipid metabolic process"/>
    <property type="evidence" value="ECO:0007669"/>
    <property type="project" value="UniProtKB-KW"/>
</dbReference>
<dbReference type="GO" id="GO:0019290">
    <property type="term" value="P:siderophore biosynthetic process"/>
    <property type="evidence" value="ECO:0000250"/>
    <property type="project" value="UniProtKB"/>
</dbReference>
<dbReference type="CDD" id="cd05368">
    <property type="entry name" value="DHRS6_like_SDR_c"/>
    <property type="match status" value="1"/>
</dbReference>
<dbReference type="FunFam" id="3.40.50.720:FF:000211">
    <property type="entry name" value="3-hydroxybutyrate dehydrogenase type 2"/>
    <property type="match status" value="1"/>
</dbReference>
<dbReference type="Gene3D" id="3.40.50.720">
    <property type="entry name" value="NAD(P)-binding Rossmann-like Domain"/>
    <property type="match status" value="1"/>
</dbReference>
<dbReference type="InterPro" id="IPR036291">
    <property type="entry name" value="NAD(P)-bd_dom_sf"/>
</dbReference>
<dbReference type="InterPro" id="IPR020904">
    <property type="entry name" value="Sc_DH/Rdtase_CS"/>
</dbReference>
<dbReference type="InterPro" id="IPR002347">
    <property type="entry name" value="SDR_fam"/>
</dbReference>
<dbReference type="InterPro" id="IPR051122">
    <property type="entry name" value="SDR_superfamily_enzyme"/>
</dbReference>
<dbReference type="PANTHER" id="PTHR43477:SF4">
    <property type="entry name" value="DEHYDROGENASE_REDUCTASE SDR FAMILY MEMBER 6"/>
    <property type="match status" value="1"/>
</dbReference>
<dbReference type="PANTHER" id="PTHR43477">
    <property type="entry name" value="DIHYDROANTICAPSIN 7-DEHYDROGENASE"/>
    <property type="match status" value="1"/>
</dbReference>
<dbReference type="Pfam" id="PF13561">
    <property type="entry name" value="adh_short_C2"/>
    <property type="match status" value="1"/>
</dbReference>
<dbReference type="PRINTS" id="PR00081">
    <property type="entry name" value="GDHRDH"/>
</dbReference>
<dbReference type="PRINTS" id="PR00080">
    <property type="entry name" value="SDRFAMILY"/>
</dbReference>
<dbReference type="SUPFAM" id="SSF51735">
    <property type="entry name" value="NAD(P)-binding Rossmann-fold domains"/>
    <property type="match status" value="1"/>
</dbReference>
<dbReference type="PROSITE" id="PS00061">
    <property type="entry name" value="ADH_SHORT"/>
    <property type="match status" value="1"/>
</dbReference>
<reference key="1">
    <citation type="submission" date="2005-08" db="EMBL/GenBank/DDBJ databases">
        <authorList>
            <consortium name="NIH - Mammalian Gene Collection (MGC) project"/>
        </authorList>
    </citation>
    <scope>NUCLEOTIDE SEQUENCE [LARGE SCALE MRNA]</scope>
    <source>
        <strain>Hereford</strain>
        <tissue>Testis</tissue>
    </source>
</reference>